<reference key="1">
    <citation type="journal article" date="2004" name="Nature">
        <title>DNA sequence and analysis of human chromosome 9.</title>
        <authorList>
            <person name="Humphray S.J."/>
            <person name="Oliver K."/>
            <person name="Hunt A.R."/>
            <person name="Plumb R.W."/>
            <person name="Loveland J.E."/>
            <person name="Howe K.L."/>
            <person name="Andrews T.D."/>
            <person name="Searle S."/>
            <person name="Hunt S.E."/>
            <person name="Scott C.E."/>
            <person name="Jones M.C."/>
            <person name="Ainscough R."/>
            <person name="Almeida J.P."/>
            <person name="Ambrose K.D."/>
            <person name="Ashwell R.I.S."/>
            <person name="Babbage A.K."/>
            <person name="Babbage S."/>
            <person name="Bagguley C.L."/>
            <person name="Bailey J."/>
            <person name="Banerjee R."/>
            <person name="Barker D.J."/>
            <person name="Barlow K.F."/>
            <person name="Bates K."/>
            <person name="Beasley H."/>
            <person name="Beasley O."/>
            <person name="Bird C.P."/>
            <person name="Bray-Allen S."/>
            <person name="Brown A.J."/>
            <person name="Brown J.Y."/>
            <person name="Burford D."/>
            <person name="Burrill W."/>
            <person name="Burton J."/>
            <person name="Carder C."/>
            <person name="Carter N.P."/>
            <person name="Chapman J.C."/>
            <person name="Chen Y."/>
            <person name="Clarke G."/>
            <person name="Clark S.Y."/>
            <person name="Clee C.M."/>
            <person name="Clegg S."/>
            <person name="Collier R.E."/>
            <person name="Corby N."/>
            <person name="Crosier M."/>
            <person name="Cummings A.T."/>
            <person name="Davies J."/>
            <person name="Dhami P."/>
            <person name="Dunn M."/>
            <person name="Dutta I."/>
            <person name="Dyer L.W."/>
            <person name="Earthrowl M.E."/>
            <person name="Faulkner L."/>
            <person name="Fleming C.J."/>
            <person name="Frankish A."/>
            <person name="Frankland J.A."/>
            <person name="French L."/>
            <person name="Fricker D.G."/>
            <person name="Garner P."/>
            <person name="Garnett J."/>
            <person name="Ghori J."/>
            <person name="Gilbert J.G.R."/>
            <person name="Glison C."/>
            <person name="Grafham D.V."/>
            <person name="Gribble S."/>
            <person name="Griffiths C."/>
            <person name="Griffiths-Jones S."/>
            <person name="Grocock R."/>
            <person name="Guy J."/>
            <person name="Hall R.E."/>
            <person name="Hammond S."/>
            <person name="Harley J.L."/>
            <person name="Harrison E.S.I."/>
            <person name="Hart E.A."/>
            <person name="Heath P.D."/>
            <person name="Henderson C.D."/>
            <person name="Hopkins B.L."/>
            <person name="Howard P.J."/>
            <person name="Howden P.J."/>
            <person name="Huckle E."/>
            <person name="Johnson C."/>
            <person name="Johnson D."/>
            <person name="Joy A.A."/>
            <person name="Kay M."/>
            <person name="Keenan S."/>
            <person name="Kershaw J.K."/>
            <person name="Kimberley A.M."/>
            <person name="King A."/>
            <person name="Knights A."/>
            <person name="Laird G.K."/>
            <person name="Langford C."/>
            <person name="Lawlor S."/>
            <person name="Leongamornlert D.A."/>
            <person name="Leversha M."/>
            <person name="Lloyd C."/>
            <person name="Lloyd D.M."/>
            <person name="Lovell J."/>
            <person name="Martin S."/>
            <person name="Mashreghi-Mohammadi M."/>
            <person name="Matthews L."/>
            <person name="McLaren S."/>
            <person name="McLay K.E."/>
            <person name="McMurray A."/>
            <person name="Milne S."/>
            <person name="Nickerson T."/>
            <person name="Nisbett J."/>
            <person name="Nordsiek G."/>
            <person name="Pearce A.V."/>
            <person name="Peck A.I."/>
            <person name="Porter K.M."/>
            <person name="Pandian R."/>
            <person name="Pelan S."/>
            <person name="Phillimore B."/>
            <person name="Povey S."/>
            <person name="Ramsey Y."/>
            <person name="Rand V."/>
            <person name="Scharfe M."/>
            <person name="Sehra H.K."/>
            <person name="Shownkeen R."/>
            <person name="Sims S.K."/>
            <person name="Skuce C.D."/>
            <person name="Smith M."/>
            <person name="Steward C.A."/>
            <person name="Swarbreck D."/>
            <person name="Sycamore N."/>
            <person name="Tester J."/>
            <person name="Thorpe A."/>
            <person name="Tracey A."/>
            <person name="Tromans A."/>
            <person name="Thomas D.W."/>
            <person name="Wall M."/>
            <person name="Wallis J.M."/>
            <person name="West A.P."/>
            <person name="Whitehead S.L."/>
            <person name="Willey D.L."/>
            <person name="Williams S.A."/>
            <person name="Wilming L."/>
            <person name="Wray P.W."/>
            <person name="Young L."/>
            <person name="Ashurst J.L."/>
            <person name="Coulson A."/>
            <person name="Blocker H."/>
            <person name="Durbin R.M."/>
            <person name="Sulston J.E."/>
            <person name="Hubbard T."/>
            <person name="Jackson M.J."/>
            <person name="Bentley D.R."/>
            <person name="Beck S."/>
            <person name="Rogers J."/>
            <person name="Dunham I."/>
        </authorList>
    </citation>
    <scope>NUCLEOTIDE SEQUENCE [LARGE SCALE GENOMIC DNA]</scope>
</reference>
<evidence type="ECO:0000256" key="1">
    <source>
        <dbReference type="SAM" id="MobiDB-lite"/>
    </source>
</evidence>
<evidence type="ECO:0000305" key="2"/>
<evidence type="ECO:0000312" key="3">
    <source>
        <dbReference type="HGNC" id="HGNC:52393"/>
    </source>
</evidence>
<name>TEX48_HUMAN</name>
<proteinExistence type="evidence at protein level"/>
<sequence>MAAHQNLILKIFCLCCRDCQEPYAINDSKVPSQTQEHKPSTQNLLLQKDELDRQNPKRINAVSHLPSRTPLIQTKKSTSSSSSEFEDLNAYASQRNFYKRNLNRYCQEHWPFQPCLTGRP</sequence>
<gene>
    <name evidence="3" type="primary">TEX48</name>
</gene>
<comment type="interaction">
    <interactant intactId="EBI-18583507">
        <id>A0A1B0GUV7</id>
    </interactant>
    <interactant intactId="EBI-10242151">
        <id>Q53EP0-3</id>
        <label>FNDC3B</label>
    </interactant>
    <organismsDiffer>false</organismsDiffer>
    <experiments>3</experiments>
</comment>
<comment type="interaction">
    <interactant intactId="EBI-18583507">
        <id>A0A1B0GUV7</id>
    </interactant>
    <interactant intactId="EBI-6165891">
        <id>Q14696</id>
        <label>MESD</label>
    </interactant>
    <organismsDiffer>false</organismsDiffer>
    <experiments>3</experiments>
</comment>
<comment type="interaction">
    <interactant intactId="EBI-18583507">
        <id>A0A1B0GUV7</id>
    </interactant>
    <interactant intactId="EBI-17216366">
        <id>Q8N8Z8</id>
        <label>ZNF441</label>
    </interactant>
    <organismsDiffer>false</organismsDiffer>
    <experiments>3</experiments>
</comment>
<accession>A0A1B0GUV7</accession>
<feature type="chain" id="PRO_0000440612" description="Testis-expressed protein 48">
    <location>
        <begin position="1"/>
        <end position="120"/>
    </location>
</feature>
<feature type="region of interest" description="Disordered" evidence="1">
    <location>
        <begin position="29"/>
        <end position="86"/>
    </location>
</feature>
<feature type="compositionally biased region" description="Polar residues" evidence="1">
    <location>
        <begin position="29"/>
        <end position="45"/>
    </location>
</feature>
<feature type="compositionally biased region" description="Low complexity" evidence="1">
    <location>
        <begin position="74"/>
        <end position="83"/>
    </location>
</feature>
<protein>
    <recommendedName>
        <fullName evidence="2">Testis-expressed protein 48</fullName>
    </recommendedName>
</protein>
<dbReference type="EMBL" id="AL160275">
    <property type="status" value="NOT_ANNOTATED_CDS"/>
    <property type="molecule type" value="Genomic_DNA"/>
</dbReference>
<dbReference type="CCDS" id="CCDS83406.1"/>
<dbReference type="RefSeq" id="NP_001186162.1">
    <property type="nucleotide sequence ID" value="NM_001199233.2"/>
</dbReference>
<dbReference type="FunCoup" id="A0A1B0GUV7">
    <property type="interactions" value="1"/>
</dbReference>
<dbReference type="IntAct" id="A0A1B0GUV7">
    <property type="interactions" value="3"/>
</dbReference>
<dbReference type="STRING" id="9606.ENSP00000490263"/>
<dbReference type="BioMuta" id="TEX48"/>
<dbReference type="DNASU" id="100505478"/>
<dbReference type="Ensembl" id="ENST00000436752.3">
    <property type="protein sequence ID" value="ENSP00000490263.1"/>
    <property type="gene ID" value="ENSG00000230601.7"/>
</dbReference>
<dbReference type="GeneID" id="100505478"/>
<dbReference type="KEGG" id="hsa:100505478"/>
<dbReference type="MANE-Select" id="ENST00000436752.3">
    <property type="protein sequence ID" value="ENSP00000490263.1"/>
    <property type="RefSeq nucleotide sequence ID" value="NM_001199233.2"/>
    <property type="RefSeq protein sequence ID" value="NP_001186162.1"/>
</dbReference>
<dbReference type="AGR" id="HGNC:52393"/>
<dbReference type="CTD" id="100505478"/>
<dbReference type="GeneCards" id="TEX48"/>
<dbReference type="HGNC" id="HGNC:52393">
    <property type="gene designation" value="TEX48"/>
</dbReference>
<dbReference type="HPA" id="ENSG00000230601">
    <property type="expression patterns" value="Tissue enriched (testis)"/>
</dbReference>
<dbReference type="neXtProt" id="NX_A0A1B0GUV7"/>
<dbReference type="OpenTargets" id="ENSG00000230601"/>
<dbReference type="VEuPathDB" id="HostDB:ENSG00000230601"/>
<dbReference type="GeneTree" id="ENSGT00520000058076"/>
<dbReference type="InParanoid" id="A0A1B0GUV7"/>
<dbReference type="OMA" id="RGFYKRN"/>
<dbReference type="OrthoDB" id="9801193at2759"/>
<dbReference type="PAN-GO" id="A0A1B0GUV7">
    <property type="GO annotations" value="0 GO annotations based on evolutionary models"/>
</dbReference>
<dbReference type="PathwayCommons" id="A0A1B0GUV7"/>
<dbReference type="SignaLink" id="A0A1B0GUV7"/>
<dbReference type="BioGRID-ORCS" id="100505478">
    <property type="hits" value="6 hits in 208 CRISPR screens"/>
</dbReference>
<dbReference type="GenomeRNAi" id="100505478"/>
<dbReference type="Pharos" id="A0A1B0GUV7">
    <property type="development level" value="Tdark"/>
</dbReference>
<dbReference type="PRO" id="PR:A0A1B0GUV7"/>
<dbReference type="Proteomes" id="UP000005640">
    <property type="component" value="Chromosome 9"/>
</dbReference>
<dbReference type="RNAct" id="A0A1B0GUV7">
    <property type="molecule type" value="protein"/>
</dbReference>
<dbReference type="Bgee" id="ENSG00000230601">
    <property type="expression patterns" value="Expressed in kidney epithelium and 74 other cell types or tissues"/>
</dbReference>
<dbReference type="ExpressionAtlas" id="A0A1B0GUV7">
    <property type="expression patterns" value="baseline and differential"/>
</dbReference>
<keyword id="KW-1185">Reference proteome</keyword>
<organism>
    <name type="scientific">Homo sapiens</name>
    <name type="common">Human</name>
    <dbReference type="NCBI Taxonomy" id="9606"/>
    <lineage>
        <taxon>Eukaryota</taxon>
        <taxon>Metazoa</taxon>
        <taxon>Chordata</taxon>
        <taxon>Craniata</taxon>
        <taxon>Vertebrata</taxon>
        <taxon>Euteleostomi</taxon>
        <taxon>Mammalia</taxon>
        <taxon>Eutheria</taxon>
        <taxon>Euarchontoglires</taxon>
        <taxon>Primates</taxon>
        <taxon>Haplorrhini</taxon>
        <taxon>Catarrhini</taxon>
        <taxon>Hominidae</taxon>
        <taxon>Homo</taxon>
    </lineage>
</organism>